<evidence type="ECO:0000255" key="1">
    <source>
        <dbReference type="HAMAP-Rule" id="MF_00038"/>
    </source>
</evidence>
<keyword id="KW-0131">Cell cycle</keyword>
<keyword id="KW-0132">Cell division</keyword>
<keyword id="KW-0997">Cell inner membrane</keyword>
<keyword id="KW-1003">Cell membrane</keyword>
<keyword id="KW-0133">Cell shape</keyword>
<keyword id="KW-0961">Cell wall biogenesis/degradation</keyword>
<keyword id="KW-0460">Magnesium</keyword>
<keyword id="KW-0472">Membrane</keyword>
<keyword id="KW-0479">Metal-binding</keyword>
<keyword id="KW-0573">Peptidoglycan synthesis</keyword>
<keyword id="KW-0808">Transferase</keyword>
<keyword id="KW-0812">Transmembrane</keyword>
<keyword id="KW-1133">Transmembrane helix</keyword>
<comment type="function">
    <text evidence="1">Catalyzes the initial step of the lipid cycle reactions in the biosynthesis of the cell wall peptidoglycan: transfers peptidoglycan precursor phospho-MurNAc-pentapeptide from UDP-MurNAc-pentapeptide onto the lipid carrier undecaprenyl phosphate, yielding undecaprenyl-pyrophosphoryl-MurNAc-pentapeptide, known as lipid I.</text>
</comment>
<comment type="catalytic activity">
    <reaction evidence="1">
        <text>UDP-N-acetyl-alpha-D-muramoyl-L-alanyl-gamma-D-glutamyl-meso-2,6-diaminopimeloyl-D-alanyl-D-alanine + di-trans,octa-cis-undecaprenyl phosphate = di-trans,octa-cis-undecaprenyl diphospho-N-acetyl-alpha-D-muramoyl-L-alanyl-D-glutamyl-meso-2,6-diaminopimeloyl-D-alanyl-D-alanine + UMP</text>
        <dbReference type="Rhea" id="RHEA:28386"/>
        <dbReference type="ChEBI" id="CHEBI:57865"/>
        <dbReference type="ChEBI" id="CHEBI:60392"/>
        <dbReference type="ChEBI" id="CHEBI:61386"/>
        <dbReference type="ChEBI" id="CHEBI:61387"/>
        <dbReference type="EC" id="2.7.8.13"/>
    </reaction>
</comment>
<comment type="cofactor">
    <cofactor evidence="1">
        <name>Mg(2+)</name>
        <dbReference type="ChEBI" id="CHEBI:18420"/>
    </cofactor>
</comment>
<comment type="pathway">
    <text evidence="1">Cell wall biogenesis; peptidoglycan biosynthesis.</text>
</comment>
<comment type="subcellular location">
    <subcellularLocation>
        <location evidence="1">Cell inner membrane</location>
        <topology evidence="1">Multi-pass membrane protein</topology>
    </subcellularLocation>
</comment>
<comment type="similarity">
    <text evidence="1">Belongs to the glycosyltransferase 4 family. MraY subfamily.</text>
</comment>
<sequence length="360" mass="39305">MLLLLAEYLQQFHKGFAVFQYLTLRGILGVLTALSLALWLGPWMIRTLQIRQIGQAVRNDGPQSHLSKSGTPTMGGALILSAIAISTLLWADLTNRYVWVVLIVTLAFGAIGWVDDYRKVIEKNSRGLPSRWKYFWQSVFGLAAAIFLYKTAPTSVETTLIIPMLKDLAIPLGAGFIVLTYFVIVGSSNAVNLTDGLDGLAIMPTVMVGGALGIFCYLSGNVKFAEYLLIPYVPGAGELIVFCGALIGAGLGFLWFNTYPAQVFMGDVGALALGAALGTIAVIVRQEVVLFIMGGVFVMETLSVVIQVASFKLTGKRVFRMAPIHHHFELKGWPEPRVIVRFWIITVILVLIGLATLKLR</sequence>
<organism>
    <name type="scientific">Pseudomonas entomophila (strain L48)</name>
    <dbReference type="NCBI Taxonomy" id="384676"/>
    <lineage>
        <taxon>Bacteria</taxon>
        <taxon>Pseudomonadati</taxon>
        <taxon>Pseudomonadota</taxon>
        <taxon>Gammaproteobacteria</taxon>
        <taxon>Pseudomonadales</taxon>
        <taxon>Pseudomonadaceae</taxon>
        <taxon>Pseudomonas</taxon>
    </lineage>
</organism>
<protein>
    <recommendedName>
        <fullName evidence="1">Phospho-N-acetylmuramoyl-pentapeptide-transferase</fullName>
        <ecNumber evidence="1">2.7.8.13</ecNumber>
    </recommendedName>
    <alternativeName>
        <fullName evidence="1">UDP-MurNAc-pentapeptide phosphotransferase</fullName>
    </alternativeName>
</protein>
<proteinExistence type="inferred from homology"/>
<name>MRAY_PSEE4</name>
<accession>Q1I5B5</accession>
<feature type="chain" id="PRO_1000003031" description="Phospho-N-acetylmuramoyl-pentapeptide-transferase">
    <location>
        <begin position="1"/>
        <end position="360"/>
    </location>
</feature>
<feature type="transmembrane region" description="Helical" evidence="1">
    <location>
        <begin position="25"/>
        <end position="45"/>
    </location>
</feature>
<feature type="transmembrane region" description="Helical" evidence="1">
    <location>
        <begin position="73"/>
        <end position="93"/>
    </location>
</feature>
<feature type="transmembrane region" description="Helical" evidence="1">
    <location>
        <begin position="97"/>
        <end position="117"/>
    </location>
</feature>
<feature type="transmembrane region" description="Helical" evidence="1">
    <location>
        <begin position="134"/>
        <end position="154"/>
    </location>
</feature>
<feature type="transmembrane region" description="Helical" evidence="1">
    <location>
        <begin position="168"/>
        <end position="188"/>
    </location>
</feature>
<feature type="transmembrane region" description="Helical" evidence="1">
    <location>
        <begin position="199"/>
        <end position="219"/>
    </location>
</feature>
<feature type="transmembrane region" description="Helical" evidence="1">
    <location>
        <begin position="236"/>
        <end position="256"/>
    </location>
</feature>
<feature type="transmembrane region" description="Helical" evidence="1">
    <location>
        <begin position="263"/>
        <end position="283"/>
    </location>
</feature>
<feature type="transmembrane region" description="Helical" evidence="1">
    <location>
        <begin position="288"/>
        <end position="308"/>
    </location>
</feature>
<feature type="transmembrane region" description="Helical" evidence="1">
    <location>
        <begin position="338"/>
        <end position="358"/>
    </location>
</feature>
<dbReference type="EC" id="2.7.8.13" evidence="1"/>
<dbReference type="EMBL" id="CT573326">
    <property type="protein sequence ID" value="CAK17170.1"/>
    <property type="molecule type" value="Genomic_DNA"/>
</dbReference>
<dbReference type="RefSeq" id="WP_011535540.1">
    <property type="nucleotide sequence ID" value="NC_008027.1"/>
</dbReference>
<dbReference type="SMR" id="Q1I5B5"/>
<dbReference type="STRING" id="384676.PSEEN4488"/>
<dbReference type="GeneID" id="93675982"/>
<dbReference type="KEGG" id="pen:PSEEN4488"/>
<dbReference type="eggNOG" id="COG0472">
    <property type="taxonomic scope" value="Bacteria"/>
</dbReference>
<dbReference type="HOGENOM" id="CLU_023982_0_0_6"/>
<dbReference type="OrthoDB" id="9805475at2"/>
<dbReference type="UniPathway" id="UPA00219"/>
<dbReference type="Proteomes" id="UP000000658">
    <property type="component" value="Chromosome"/>
</dbReference>
<dbReference type="GO" id="GO:0005886">
    <property type="term" value="C:plasma membrane"/>
    <property type="evidence" value="ECO:0007669"/>
    <property type="project" value="UniProtKB-SubCell"/>
</dbReference>
<dbReference type="GO" id="GO:0046872">
    <property type="term" value="F:metal ion binding"/>
    <property type="evidence" value="ECO:0007669"/>
    <property type="project" value="UniProtKB-KW"/>
</dbReference>
<dbReference type="GO" id="GO:0008963">
    <property type="term" value="F:phospho-N-acetylmuramoyl-pentapeptide-transferase activity"/>
    <property type="evidence" value="ECO:0007669"/>
    <property type="project" value="UniProtKB-UniRule"/>
</dbReference>
<dbReference type="GO" id="GO:0051992">
    <property type="term" value="F:UDP-N-acetylmuramoyl-L-alanyl-D-glutamyl-meso-2,6-diaminopimelyl-D-alanyl-D-alanine:undecaprenyl-phosphate transferase activity"/>
    <property type="evidence" value="ECO:0007669"/>
    <property type="project" value="RHEA"/>
</dbReference>
<dbReference type="GO" id="GO:0051301">
    <property type="term" value="P:cell division"/>
    <property type="evidence" value="ECO:0007669"/>
    <property type="project" value="UniProtKB-KW"/>
</dbReference>
<dbReference type="GO" id="GO:0071555">
    <property type="term" value="P:cell wall organization"/>
    <property type="evidence" value="ECO:0007669"/>
    <property type="project" value="UniProtKB-KW"/>
</dbReference>
<dbReference type="GO" id="GO:0009252">
    <property type="term" value="P:peptidoglycan biosynthetic process"/>
    <property type="evidence" value="ECO:0007669"/>
    <property type="project" value="UniProtKB-UniRule"/>
</dbReference>
<dbReference type="GO" id="GO:0008360">
    <property type="term" value="P:regulation of cell shape"/>
    <property type="evidence" value="ECO:0007669"/>
    <property type="project" value="UniProtKB-KW"/>
</dbReference>
<dbReference type="CDD" id="cd06852">
    <property type="entry name" value="GT_MraY"/>
    <property type="match status" value="1"/>
</dbReference>
<dbReference type="HAMAP" id="MF_00038">
    <property type="entry name" value="MraY"/>
    <property type="match status" value="1"/>
</dbReference>
<dbReference type="InterPro" id="IPR000715">
    <property type="entry name" value="Glycosyl_transferase_4"/>
</dbReference>
<dbReference type="InterPro" id="IPR003524">
    <property type="entry name" value="PNAcMuramoyl-5peptid_Trfase"/>
</dbReference>
<dbReference type="InterPro" id="IPR018480">
    <property type="entry name" value="PNAcMuramoyl-5peptid_Trfase_CS"/>
</dbReference>
<dbReference type="NCBIfam" id="TIGR00445">
    <property type="entry name" value="mraY"/>
    <property type="match status" value="1"/>
</dbReference>
<dbReference type="PANTHER" id="PTHR22926">
    <property type="entry name" value="PHOSPHO-N-ACETYLMURAMOYL-PENTAPEPTIDE-TRANSFERASE"/>
    <property type="match status" value="1"/>
</dbReference>
<dbReference type="PANTHER" id="PTHR22926:SF5">
    <property type="entry name" value="PHOSPHO-N-ACETYLMURAMOYL-PENTAPEPTIDE-TRANSFERASE HOMOLOG"/>
    <property type="match status" value="1"/>
</dbReference>
<dbReference type="Pfam" id="PF00953">
    <property type="entry name" value="Glycos_transf_4"/>
    <property type="match status" value="1"/>
</dbReference>
<dbReference type="Pfam" id="PF10555">
    <property type="entry name" value="MraY_sig1"/>
    <property type="match status" value="1"/>
</dbReference>
<dbReference type="PROSITE" id="PS01347">
    <property type="entry name" value="MRAY_1"/>
    <property type="match status" value="1"/>
</dbReference>
<dbReference type="PROSITE" id="PS01348">
    <property type="entry name" value="MRAY_2"/>
    <property type="match status" value="1"/>
</dbReference>
<reference key="1">
    <citation type="journal article" date="2006" name="Nat. Biotechnol.">
        <title>Complete genome sequence of the entomopathogenic and metabolically versatile soil bacterium Pseudomonas entomophila.</title>
        <authorList>
            <person name="Vodovar N."/>
            <person name="Vallenet D."/>
            <person name="Cruveiller S."/>
            <person name="Rouy Z."/>
            <person name="Barbe V."/>
            <person name="Acosta C."/>
            <person name="Cattolico L."/>
            <person name="Jubin C."/>
            <person name="Lajus A."/>
            <person name="Segurens B."/>
            <person name="Vacherie B."/>
            <person name="Wincker P."/>
            <person name="Weissenbach J."/>
            <person name="Lemaitre B."/>
            <person name="Medigue C."/>
            <person name="Boccard F."/>
        </authorList>
    </citation>
    <scope>NUCLEOTIDE SEQUENCE [LARGE SCALE GENOMIC DNA]</scope>
    <source>
        <strain>L48</strain>
    </source>
</reference>
<gene>
    <name evidence="1" type="primary">mraY</name>
    <name type="ordered locus">PSEEN4488</name>
</gene>